<reference key="1">
    <citation type="journal article" date="2007" name="PLoS Genet.">
        <title>A tale of two oxidation states: bacterial colonization of arsenic-rich environments.</title>
        <authorList>
            <person name="Muller D."/>
            <person name="Medigue C."/>
            <person name="Koechler S."/>
            <person name="Barbe V."/>
            <person name="Barakat M."/>
            <person name="Talla E."/>
            <person name="Bonnefoy V."/>
            <person name="Krin E."/>
            <person name="Arsene-Ploetze F."/>
            <person name="Carapito C."/>
            <person name="Chandler M."/>
            <person name="Cournoyer B."/>
            <person name="Cruveiller S."/>
            <person name="Dossat C."/>
            <person name="Duval S."/>
            <person name="Heymann M."/>
            <person name="Leize E."/>
            <person name="Lieutaud A."/>
            <person name="Lievremont D."/>
            <person name="Makita Y."/>
            <person name="Mangenot S."/>
            <person name="Nitschke W."/>
            <person name="Ortet P."/>
            <person name="Perdrial N."/>
            <person name="Schoepp B."/>
            <person name="Siguier P."/>
            <person name="Simeonova D.D."/>
            <person name="Rouy Z."/>
            <person name="Segurens B."/>
            <person name="Turlin E."/>
            <person name="Vallenet D."/>
            <person name="van Dorsselaer A."/>
            <person name="Weiss S."/>
            <person name="Weissenbach J."/>
            <person name="Lett M.-C."/>
            <person name="Danchin A."/>
            <person name="Bertin P.N."/>
        </authorList>
    </citation>
    <scope>NUCLEOTIDE SEQUENCE [LARGE SCALE GENOMIC DNA]</scope>
    <source>
        <strain>ULPAs1</strain>
    </source>
</reference>
<protein>
    <recommendedName>
        <fullName evidence="1">PKHD-type hydroxylase HEAR3399</fullName>
        <ecNumber evidence="1">1.14.11.-</ecNumber>
    </recommendedName>
</protein>
<comment type="cofactor">
    <cofactor evidence="1">
        <name>Fe(2+)</name>
        <dbReference type="ChEBI" id="CHEBI:29033"/>
    </cofactor>
    <text evidence="1">Binds 1 Fe(2+) ion per subunit.</text>
</comment>
<comment type="cofactor">
    <cofactor evidence="1">
        <name>L-ascorbate</name>
        <dbReference type="ChEBI" id="CHEBI:38290"/>
    </cofactor>
</comment>
<name>Y3399_HERAR</name>
<sequence>MLHIPSVLTSAQVIEIRQKLDAADWVDGKATVGAQGAQVKKNRQLPELSPVGMELGQIILKALVSNPLFFSAALPMRYMPPLFNRYEGGEHYGFHIDGSVRTIPGSNLSLRTDLSCTLFLCEPEDYDGGELIVSDTYGEHEVKLPAGDMILYPSSSLHKVEPVTRGARVCSFFWLQSMVADDGKRSLLFELDQNIQKLREKLGDCEEVVGLTGHYHNLLRQWAAV</sequence>
<dbReference type="EC" id="1.14.11.-" evidence="1"/>
<dbReference type="EMBL" id="CU207211">
    <property type="protein sequence ID" value="CAL63500.1"/>
    <property type="molecule type" value="Genomic_DNA"/>
</dbReference>
<dbReference type="SMR" id="A4GAG3"/>
<dbReference type="STRING" id="204773.HEAR3399"/>
<dbReference type="KEGG" id="har:HEAR3399"/>
<dbReference type="eggNOG" id="COG3128">
    <property type="taxonomic scope" value="Bacteria"/>
</dbReference>
<dbReference type="HOGENOM" id="CLU_106663_0_0_4"/>
<dbReference type="Proteomes" id="UP000006697">
    <property type="component" value="Chromosome"/>
</dbReference>
<dbReference type="GO" id="GO:0016706">
    <property type="term" value="F:2-oxoglutarate-dependent dioxygenase activity"/>
    <property type="evidence" value="ECO:0007669"/>
    <property type="project" value="UniProtKB-UniRule"/>
</dbReference>
<dbReference type="GO" id="GO:0005506">
    <property type="term" value="F:iron ion binding"/>
    <property type="evidence" value="ECO:0007669"/>
    <property type="project" value="UniProtKB-UniRule"/>
</dbReference>
<dbReference type="GO" id="GO:0031418">
    <property type="term" value="F:L-ascorbic acid binding"/>
    <property type="evidence" value="ECO:0007669"/>
    <property type="project" value="UniProtKB-KW"/>
</dbReference>
<dbReference type="GO" id="GO:0006974">
    <property type="term" value="P:DNA damage response"/>
    <property type="evidence" value="ECO:0007669"/>
    <property type="project" value="TreeGrafter"/>
</dbReference>
<dbReference type="GO" id="GO:0006879">
    <property type="term" value="P:intracellular iron ion homeostasis"/>
    <property type="evidence" value="ECO:0007669"/>
    <property type="project" value="TreeGrafter"/>
</dbReference>
<dbReference type="Gene3D" id="2.60.120.620">
    <property type="entry name" value="q2cbj1_9rhob like domain"/>
    <property type="match status" value="1"/>
</dbReference>
<dbReference type="Gene3D" id="4.10.860.20">
    <property type="entry name" value="Rabenosyn, Rab binding domain"/>
    <property type="match status" value="1"/>
</dbReference>
<dbReference type="HAMAP" id="MF_00657">
    <property type="entry name" value="Hydroxyl_YbiX"/>
    <property type="match status" value="1"/>
</dbReference>
<dbReference type="InterPro" id="IPR005123">
    <property type="entry name" value="Oxoglu/Fe-dep_dioxygenase_dom"/>
</dbReference>
<dbReference type="InterPro" id="IPR041097">
    <property type="entry name" value="PKHD_C"/>
</dbReference>
<dbReference type="InterPro" id="IPR023550">
    <property type="entry name" value="PKHD_hydroxylase"/>
</dbReference>
<dbReference type="InterPro" id="IPR006620">
    <property type="entry name" value="Pro_4_hyd_alph"/>
</dbReference>
<dbReference type="InterPro" id="IPR044862">
    <property type="entry name" value="Pro_4_hyd_alph_FE2OG_OXY"/>
</dbReference>
<dbReference type="NCBIfam" id="NF003973">
    <property type="entry name" value="PRK05467.1-2"/>
    <property type="match status" value="1"/>
</dbReference>
<dbReference type="NCBIfam" id="NF003974">
    <property type="entry name" value="PRK05467.1-3"/>
    <property type="match status" value="1"/>
</dbReference>
<dbReference type="NCBIfam" id="NF003975">
    <property type="entry name" value="PRK05467.1-4"/>
    <property type="match status" value="1"/>
</dbReference>
<dbReference type="PANTHER" id="PTHR41536">
    <property type="entry name" value="PKHD-TYPE HYDROXYLASE YBIX"/>
    <property type="match status" value="1"/>
</dbReference>
<dbReference type="PANTHER" id="PTHR41536:SF1">
    <property type="entry name" value="PKHD-TYPE HYDROXYLASE YBIX"/>
    <property type="match status" value="1"/>
</dbReference>
<dbReference type="Pfam" id="PF13640">
    <property type="entry name" value="2OG-FeII_Oxy_3"/>
    <property type="match status" value="1"/>
</dbReference>
<dbReference type="Pfam" id="PF18331">
    <property type="entry name" value="PKHD_C"/>
    <property type="match status" value="1"/>
</dbReference>
<dbReference type="SMART" id="SM00702">
    <property type="entry name" value="P4Hc"/>
    <property type="match status" value="1"/>
</dbReference>
<dbReference type="PROSITE" id="PS51471">
    <property type="entry name" value="FE2OG_OXY"/>
    <property type="match status" value="1"/>
</dbReference>
<evidence type="ECO:0000255" key="1">
    <source>
        <dbReference type="HAMAP-Rule" id="MF_00657"/>
    </source>
</evidence>
<keyword id="KW-0223">Dioxygenase</keyword>
<keyword id="KW-0408">Iron</keyword>
<keyword id="KW-0479">Metal-binding</keyword>
<keyword id="KW-0560">Oxidoreductase</keyword>
<keyword id="KW-1185">Reference proteome</keyword>
<keyword id="KW-0847">Vitamin C</keyword>
<accession>A4GAG3</accession>
<proteinExistence type="inferred from homology"/>
<gene>
    <name type="ordered locus">HEAR3399</name>
</gene>
<organism>
    <name type="scientific">Herminiimonas arsenicoxydans</name>
    <dbReference type="NCBI Taxonomy" id="204773"/>
    <lineage>
        <taxon>Bacteria</taxon>
        <taxon>Pseudomonadati</taxon>
        <taxon>Pseudomonadota</taxon>
        <taxon>Betaproteobacteria</taxon>
        <taxon>Burkholderiales</taxon>
        <taxon>Oxalobacteraceae</taxon>
        <taxon>Herminiimonas</taxon>
    </lineage>
</organism>
<feature type="chain" id="PRO_0000346483" description="PKHD-type hydroxylase HEAR3399">
    <location>
        <begin position="1"/>
        <end position="225"/>
    </location>
</feature>
<feature type="domain" description="Fe2OG dioxygenase" evidence="1">
    <location>
        <begin position="77"/>
        <end position="177"/>
    </location>
</feature>
<feature type="binding site" evidence="1">
    <location>
        <position position="95"/>
    </location>
    <ligand>
        <name>Fe cation</name>
        <dbReference type="ChEBI" id="CHEBI:24875"/>
    </ligand>
</feature>
<feature type="binding site" evidence="1">
    <location>
        <position position="97"/>
    </location>
    <ligand>
        <name>Fe cation</name>
        <dbReference type="ChEBI" id="CHEBI:24875"/>
    </ligand>
</feature>
<feature type="binding site" evidence="1">
    <location>
        <position position="158"/>
    </location>
    <ligand>
        <name>Fe cation</name>
        <dbReference type="ChEBI" id="CHEBI:24875"/>
    </ligand>
</feature>
<feature type="binding site" evidence="1">
    <location>
        <position position="168"/>
    </location>
    <ligand>
        <name>2-oxoglutarate</name>
        <dbReference type="ChEBI" id="CHEBI:16810"/>
    </ligand>
</feature>